<gene>
    <name type="primary">TXN</name>
</gene>
<name>THIO_CHICK</name>
<sequence>MVKSVGNLADFEAELKAAGEKLVVVDFSATWCGPCKMIKPFFHSLCDKFGDVVFIEIDVDDAQDVATHCDVKCMPTFQFYKNGKKVQEFSGANKEKLEETIKSLV</sequence>
<dbReference type="EMBL" id="J03882">
    <property type="protein sequence ID" value="AAA49092.1"/>
    <property type="molecule type" value="mRNA"/>
</dbReference>
<dbReference type="PIR" id="A30006">
    <property type="entry name" value="A30006"/>
</dbReference>
<dbReference type="RefSeq" id="NP_990784.1">
    <property type="nucleotide sequence ID" value="NM_205453.2"/>
</dbReference>
<dbReference type="SMR" id="P08629"/>
<dbReference type="BioGRID" id="676686">
    <property type="interactions" value="1"/>
</dbReference>
<dbReference type="FunCoup" id="P08629">
    <property type="interactions" value="2140"/>
</dbReference>
<dbReference type="STRING" id="9031.ENSGALP00000025280"/>
<dbReference type="PaxDb" id="9031-ENSGALP00000025280"/>
<dbReference type="Ensembl" id="ENSGALT00010013138.1">
    <property type="protein sequence ID" value="ENSGALP00010007700.1"/>
    <property type="gene ID" value="ENSGALG00010005495.1"/>
</dbReference>
<dbReference type="GeneID" id="396437"/>
<dbReference type="KEGG" id="gga:396437"/>
<dbReference type="CTD" id="7295"/>
<dbReference type="VEuPathDB" id="HostDB:geneid_396437"/>
<dbReference type="eggNOG" id="KOG0907">
    <property type="taxonomic scope" value="Eukaryota"/>
</dbReference>
<dbReference type="GeneTree" id="ENSGT00940000154259"/>
<dbReference type="HOGENOM" id="CLU_090389_14_6_1"/>
<dbReference type="InParanoid" id="P08629"/>
<dbReference type="OMA" id="HIHYVTD"/>
<dbReference type="OrthoDB" id="2121326at2759"/>
<dbReference type="PhylomeDB" id="P08629"/>
<dbReference type="TreeFam" id="TF318932"/>
<dbReference type="Reactome" id="R-GGA-2559580">
    <property type="pathway name" value="Oxidative Stress Induced Senescence"/>
</dbReference>
<dbReference type="Reactome" id="R-GGA-3299685">
    <property type="pathway name" value="Detoxification of Reactive Oxygen Species"/>
</dbReference>
<dbReference type="Reactome" id="R-GGA-499943">
    <property type="pathway name" value="Interconversion of nucleotide di- and triphosphates"/>
</dbReference>
<dbReference type="Reactome" id="R-GGA-5628897">
    <property type="pathway name" value="TP53 Regulates Metabolic Genes"/>
</dbReference>
<dbReference type="Reactome" id="R-GGA-5676934">
    <property type="pathway name" value="Protein repair"/>
</dbReference>
<dbReference type="Reactome" id="R-GGA-844456">
    <property type="pathway name" value="The NLRP3 inflammasome"/>
</dbReference>
<dbReference type="PRO" id="PR:P08629"/>
<dbReference type="Proteomes" id="UP000000539">
    <property type="component" value="Chromosome Z"/>
</dbReference>
<dbReference type="Bgee" id="ENSGALG00000015704">
    <property type="expression patterns" value="Expressed in kidney and 14 other cell types or tissues"/>
</dbReference>
<dbReference type="GO" id="GO:0005737">
    <property type="term" value="C:cytoplasm"/>
    <property type="evidence" value="ECO:0007669"/>
    <property type="project" value="UniProtKB-SubCell"/>
</dbReference>
<dbReference type="GO" id="GO:0005576">
    <property type="term" value="C:extracellular region"/>
    <property type="evidence" value="ECO:0007669"/>
    <property type="project" value="UniProtKB-SubCell"/>
</dbReference>
<dbReference type="GO" id="GO:0005634">
    <property type="term" value="C:nucleus"/>
    <property type="evidence" value="ECO:0007669"/>
    <property type="project" value="UniProtKB-SubCell"/>
</dbReference>
<dbReference type="GO" id="GO:0015035">
    <property type="term" value="F:protein-disulfide reductase activity"/>
    <property type="evidence" value="ECO:0007669"/>
    <property type="project" value="InterPro"/>
</dbReference>
<dbReference type="GO" id="GO:0043388">
    <property type="term" value="P:positive regulation of DNA binding"/>
    <property type="evidence" value="ECO:0000250"/>
    <property type="project" value="UniProtKB"/>
</dbReference>
<dbReference type="GO" id="GO:0009314">
    <property type="term" value="P:response to radiation"/>
    <property type="evidence" value="ECO:0000250"/>
    <property type="project" value="UniProtKB"/>
</dbReference>
<dbReference type="CDD" id="cd02947">
    <property type="entry name" value="TRX_family"/>
    <property type="match status" value="1"/>
</dbReference>
<dbReference type="FunFam" id="3.40.30.10:FF:000130">
    <property type="entry name" value="Thioredoxin"/>
    <property type="match status" value="1"/>
</dbReference>
<dbReference type="Gene3D" id="3.40.30.10">
    <property type="entry name" value="Glutaredoxin"/>
    <property type="match status" value="1"/>
</dbReference>
<dbReference type="InterPro" id="IPR005746">
    <property type="entry name" value="Thioredoxin"/>
</dbReference>
<dbReference type="InterPro" id="IPR036249">
    <property type="entry name" value="Thioredoxin-like_sf"/>
</dbReference>
<dbReference type="InterPro" id="IPR017937">
    <property type="entry name" value="Thioredoxin_CS"/>
</dbReference>
<dbReference type="InterPro" id="IPR013766">
    <property type="entry name" value="Thioredoxin_domain"/>
</dbReference>
<dbReference type="PANTHER" id="PTHR46115">
    <property type="entry name" value="THIOREDOXIN-LIKE PROTEIN 1"/>
    <property type="match status" value="1"/>
</dbReference>
<dbReference type="Pfam" id="PF00085">
    <property type="entry name" value="Thioredoxin"/>
    <property type="match status" value="1"/>
</dbReference>
<dbReference type="PIRSF" id="PIRSF000077">
    <property type="entry name" value="Thioredoxin"/>
    <property type="match status" value="1"/>
</dbReference>
<dbReference type="PRINTS" id="PR00421">
    <property type="entry name" value="THIOREDOXIN"/>
</dbReference>
<dbReference type="SUPFAM" id="SSF52833">
    <property type="entry name" value="Thioredoxin-like"/>
    <property type="match status" value="1"/>
</dbReference>
<dbReference type="PROSITE" id="PS00194">
    <property type="entry name" value="THIOREDOXIN_1"/>
    <property type="match status" value="1"/>
</dbReference>
<dbReference type="PROSITE" id="PS51352">
    <property type="entry name" value="THIOREDOXIN_2"/>
    <property type="match status" value="1"/>
</dbReference>
<comment type="function">
    <text evidence="1">Participates in various redox reactions through the reversible oxidation of its active center dithiol to a disulfide and catalyzes dithiol-disulfide exchange reactions (By similarity). Plays a role in the reversible S-nitrosylation of cysteine residues in target proteins, and thereby contributes to the response to intracellular nitric oxide. Nitrosylates the active site Cys of CASP3 in response to nitric oxide (NO), and thereby inhibits caspase-3 activity. Induces the FOS/JUN AP-1 DNA binding activity in ionizing radiation (IR) cells through its oxidation/reduction status and stimulates AP-1 transcriptional activity (By similarity).</text>
</comment>
<comment type="subcellular location">
    <subcellularLocation>
        <location evidence="2">Nucleus</location>
    </subcellularLocation>
    <subcellularLocation>
        <location evidence="2">Cytoplasm</location>
    </subcellularLocation>
    <subcellularLocation>
        <location evidence="2">Secreted</location>
    </subcellularLocation>
    <text evidence="3">Shuttles between the nucleus and nucleolus.</text>
</comment>
<comment type="PTM">
    <text evidence="1">May be nitrosylated on several cysteine residues, depending on the oxidation state. Nitrosylated Cys-73 may serve as donor for nitrosylation of target proteins (By similarity).</text>
</comment>
<comment type="similarity">
    <text evidence="5">Belongs to the thioredoxin family.</text>
</comment>
<feature type="initiator methionine" description="Removed" evidence="1">
    <location>
        <position position="1"/>
    </location>
</feature>
<feature type="chain" id="PRO_0000120013" description="Thioredoxin">
    <location>
        <begin position="2"/>
        <end position="105"/>
    </location>
</feature>
<feature type="domain" description="Thioredoxin" evidence="4">
    <location>
        <begin position="2"/>
        <end position="105"/>
    </location>
</feature>
<feature type="active site" description="Nucleophile" evidence="1">
    <location>
        <position position="32"/>
    </location>
</feature>
<feature type="active site" description="Nucleophile" evidence="1">
    <location>
        <position position="35"/>
    </location>
</feature>
<feature type="site" description="Deprotonates C-terminal active site Cys" evidence="1">
    <location>
        <position position="26"/>
    </location>
</feature>
<feature type="site" description="Contributes to redox potential value" evidence="1">
    <location>
        <position position="33"/>
    </location>
</feature>
<feature type="site" description="Contributes to redox potential value" evidence="1">
    <location>
        <position position="34"/>
    </location>
</feature>
<feature type="modified residue" description="S-nitrosocysteine" evidence="1">
    <location>
        <position position="69"/>
    </location>
</feature>
<feature type="modified residue" description="S-nitrosocysteine" evidence="1">
    <location>
        <position position="73"/>
    </location>
</feature>
<feature type="disulfide bond" description="Redox-active" evidence="4">
    <location>
        <begin position="32"/>
        <end position="35"/>
    </location>
</feature>
<keyword id="KW-0010">Activator</keyword>
<keyword id="KW-0963">Cytoplasm</keyword>
<keyword id="KW-1015">Disulfide bond</keyword>
<keyword id="KW-0249">Electron transport</keyword>
<keyword id="KW-0539">Nucleus</keyword>
<keyword id="KW-0676">Redox-active center</keyword>
<keyword id="KW-1185">Reference proteome</keyword>
<keyword id="KW-0702">S-nitrosylation</keyword>
<keyword id="KW-0964">Secreted</keyword>
<keyword id="KW-0804">Transcription</keyword>
<keyword id="KW-0805">Transcription regulation</keyword>
<keyword id="KW-0813">Transport</keyword>
<accession>P08629</accession>
<reference key="1">
    <citation type="journal article" date="1988" name="J. Biol. Chem.">
        <title>Isolation of a chicken thioredoxin cDNA clone. Thioredoxin mRNA is differentially expressed in normal and Rous sarcoma virus-transformed chicken embryo fibroblasts.</title>
        <authorList>
            <person name="Jones S.W."/>
            <person name="Luk K.-C."/>
        </authorList>
    </citation>
    <scope>NUCLEOTIDE SEQUENCE [MRNA]</scope>
</reference>
<evidence type="ECO:0000250" key="1"/>
<evidence type="ECO:0000250" key="2">
    <source>
        <dbReference type="UniProtKB" id="P10599"/>
    </source>
</evidence>
<evidence type="ECO:0000250" key="3">
    <source>
        <dbReference type="UniProtKB" id="Q811S9"/>
    </source>
</evidence>
<evidence type="ECO:0000255" key="4">
    <source>
        <dbReference type="PROSITE-ProRule" id="PRU00691"/>
    </source>
</evidence>
<evidence type="ECO:0000305" key="5"/>
<proteinExistence type="inferred from homology"/>
<organism>
    <name type="scientific">Gallus gallus</name>
    <name type="common">Chicken</name>
    <dbReference type="NCBI Taxonomy" id="9031"/>
    <lineage>
        <taxon>Eukaryota</taxon>
        <taxon>Metazoa</taxon>
        <taxon>Chordata</taxon>
        <taxon>Craniata</taxon>
        <taxon>Vertebrata</taxon>
        <taxon>Euteleostomi</taxon>
        <taxon>Archelosauria</taxon>
        <taxon>Archosauria</taxon>
        <taxon>Dinosauria</taxon>
        <taxon>Saurischia</taxon>
        <taxon>Theropoda</taxon>
        <taxon>Coelurosauria</taxon>
        <taxon>Aves</taxon>
        <taxon>Neognathae</taxon>
        <taxon>Galloanserae</taxon>
        <taxon>Galliformes</taxon>
        <taxon>Phasianidae</taxon>
        <taxon>Phasianinae</taxon>
        <taxon>Gallus</taxon>
    </lineage>
</organism>
<protein>
    <recommendedName>
        <fullName>Thioredoxin</fullName>
        <shortName>Trx</shortName>
    </recommendedName>
</protein>